<gene>
    <name type="primary">rev</name>
</gene>
<comment type="function">
    <text evidence="1">Escorts unspliced or incompletely spliced viral pre-mRNAs (late transcripts) out of the nucleus of infected cells. These pre-mRNAs carry a recognition sequence called Rev responsive element (RRE) located in the env gene, that is not present in fully spliced viral mRNAs (early transcripts). This function is essential since most viral proteins are translated from unspliced or partially spliced pre-mRNAs which cannot exit the nucleus by the pathway used by fully processed cellular mRNAs (By similarity).</text>
</comment>
<comment type="subunit">
    <text evidence="1">Homomultimer; when bound to the RRE. Multimeric assembly is essential for activity (By similarity).</text>
</comment>
<comment type="subcellular location">
    <subcellularLocation>
        <location evidence="1">Host nucleus</location>
        <location evidence="1">Host nucleolus</location>
    </subcellularLocation>
    <subcellularLocation>
        <location evidence="1">Host cytoplasm</location>
    </subcellularLocation>
    <text evidence="1">The presence of both nuclear import and nuclear export signals leads to continuous shuttling between the nucleus and cytoplasm.</text>
</comment>
<comment type="domain">
    <text evidence="1">The RNA-binding motif binds to the RRE present in incompletely spliced viral pre-mRNAs. This region also contains the NLS which mediates nuclear localization. These overlapping functions prevent Rev bound to RRE from undesirable return to the nucleus. When Rev binds the RRE, the NLS becomes masked while the NES remains accessible (By similarity).</text>
</comment>
<sequence length="144" mass="16547">MASSKNMPSRITQKSMEPPLRETWQQVVQEMVMRKQRDEEEKQNLVTGLQASSGDPIYTGNSSDRSTRGPGGKTKRRKGWFQWLRKLRAREKNIPSQFYPDMEGNCAGLENLTLGEGMEENPIYDSTAATNTANMDGRNWMEWR</sequence>
<organismHost>
    <name type="scientific">Ovis aries</name>
    <name type="common">Sheep</name>
    <dbReference type="NCBI Taxonomy" id="9940"/>
</organismHost>
<accession>P16903</accession>
<feature type="chain" id="PRO_0000085480" description="Protein Rev">
    <location>
        <begin position="1"/>
        <end position="144"/>
    </location>
</feature>
<feature type="region of interest" description="Disordered" evidence="2">
    <location>
        <begin position="1"/>
        <end position="77"/>
    </location>
</feature>
<feature type="short sequence motif" description="Nuclear localization signal and RNA-binding (RRE)" evidence="1">
    <location>
        <begin position="75"/>
        <end position="92"/>
    </location>
</feature>
<feature type="short sequence motif" description="Nuclear export signal" evidence="1">
    <location>
        <begin position="106"/>
        <end position="115"/>
    </location>
</feature>
<feature type="compositionally biased region" description="Polar residues" evidence="2">
    <location>
        <begin position="1"/>
        <end position="15"/>
    </location>
</feature>
<feature type="compositionally biased region" description="Basic and acidic residues" evidence="2">
    <location>
        <begin position="32"/>
        <end position="43"/>
    </location>
</feature>
<feature type="compositionally biased region" description="Polar residues" evidence="2">
    <location>
        <begin position="44"/>
        <end position="64"/>
    </location>
</feature>
<proteinExistence type="inferred from homology"/>
<name>REV_OMVVS</name>
<protein>
    <recommendedName>
        <fullName>Protein Rev</fullName>
    </recommendedName>
</protein>
<organism>
    <name type="scientific">Ovine maedi visna related virus (strain South Africa)</name>
    <name type="common">SA-OMVV</name>
    <name type="synonym">Ovine lentivirus</name>
    <dbReference type="NCBI Taxonomy" id="11664"/>
    <lineage>
        <taxon>Viruses</taxon>
        <taxon>Riboviria</taxon>
        <taxon>Pararnavirae</taxon>
        <taxon>Artverviricota</taxon>
        <taxon>Revtraviricetes</taxon>
        <taxon>Ortervirales</taxon>
        <taxon>Retroviridae</taxon>
        <taxon>Orthoretrovirinae</taxon>
        <taxon>Lentivirus</taxon>
        <taxon>Visna-maedi virus</taxon>
    </lineage>
</organism>
<dbReference type="EMBL" id="M31646">
    <property type="protein sequence ID" value="AAA66816.1"/>
    <property type="molecule type" value="Genomic_RNA"/>
</dbReference>
<dbReference type="EMBL" id="M34193">
    <property type="status" value="NOT_ANNOTATED_CDS"/>
    <property type="molecule type" value="Genomic_DNA"/>
</dbReference>
<dbReference type="SMR" id="P16903"/>
<dbReference type="Proteomes" id="UP000243523">
    <property type="component" value="Segment"/>
</dbReference>
<dbReference type="GO" id="GO:0030430">
    <property type="term" value="C:host cell cytoplasm"/>
    <property type="evidence" value="ECO:0007669"/>
    <property type="project" value="UniProtKB-SubCell"/>
</dbReference>
<dbReference type="GO" id="GO:0044196">
    <property type="term" value="C:host cell nucleolus"/>
    <property type="evidence" value="ECO:0007669"/>
    <property type="project" value="UniProtKB-SubCell"/>
</dbReference>
<dbReference type="GO" id="GO:0003723">
    <property type="term" value="F:RNA binding"/>
    <property type="evidence" value="ECO:0007669"/>
    <property type="project" value="UniProtKB-KW"/>
</dbReference>
<dbReference type="GO" id="GO:0051028">
    <property type="term" value="P:mRNA transport"/>
    <property type="evidence" value="ECO:0007669"/>
    <property type="project" value="UniProtKB-KW"/>
</dbReference>
<dbReference type="InterPro" id="IPR016400">
    <property type="entry name" value="Rev_lentivir"/>
</dbReference>
<dbReference type="PIRSF" id="PIRSF003867">
    <property type="entry name" value="Rev_lenti-OC"/>
    <property type="match status" value="1"/>
</dbReference>
<reference key="1">
    <citation type="journal article" date="1990" name="Virology">
        <title>Nucleotide sequence analysis of SA-OMVV, a visna-related ovine lentivirus: phylogenetic history of lentiviruses.</title>
        <authorList>
            <person name="Querat G."/>
            <person name="Audoly G."/>
            <person name="Sonigo P."/>
            <person name="Vigne R."/>
        </authorList>
    </citation>
    <scope>NUCLEOTIDE SEQUENCE [GENOMIC RNA]</scope>
</reference>
<evidence type="ECO:0000250" key="1"/>
<evidence type="ECO:0000256" key="2">
    <source>
        <dbReference type="SAM" id="MobiDB-lite"/>
    </source>
</evidence>
<keyword id="KW-1035">Host cytoplasm</keyword>
<keyword id="KW-1048">Host nucleus</keyword>
<keyword id="KW-0509">mRNA transport</keyword>
<keyword id="KW-0694">RNA-binding</keyword>
<keyword id="KW-0813">Transport</keyword>